<dbReference type="EC" id="3.6.5.-" evidence="1"/>
<dbReference type="EMBL" id="D90216">
    <property type="protein sequence ID" value="BAA14247.1"/>
    <property type="molecule type" value="Genomic_DNA"/>
</dbReference>
<dbReference type="PIR" id="D42725">
    <property type="entry name" value="D42725"/>
</dbReference>
<dbReference type="SMR" id="P31521"/>
<dbReference type="GO" id="GO:0005524">
    <property type="term" value="F:ATP binding"/>
    <property type="evidence" value="ECO:0007669"/>
    <property type="project" value="UniProtKB-KW"/>
</dbReference>
<dbReference type="GO" id="GO:0016787">
    <property type="term" value="F:hydrolase activity"/>
    <property type="evidence" value="ECO:0007669"/>
    <property type="project" value="UniProtKB-KW"/>
</dbReference>
<dbReference type="CDD" id="cd03112">
    <property type="entry name" value="CobW-like"/>
    <property type="match status" value="1"/>
</dbReference>
<dbReference type="Gene3D" id="3.30.1220.10">
    <property type="entry name" value="CobW-like, C-terminal domain"/>
    <property type="match status" value="1"/>
</dbReference>
<dbReference type="Gene3D" id="3.40.50.300">
    <property type="entry name" value="P-loop containing nucleotide triphosphate hydrolases"/>
    <property type="match status" value="1"/>
</dbReference>
<dbReference type="InterPro" id="IPR036627">
    <property type="entry name" value="CobW-likC_sf"/>
</dbReference>
<dbReference type="InterPro" id="IPR011629">
    <property type="entry name" value="CobW-like_C"/>
</dbReference>
<dbReference type="InterPro" id="IPR003495">
    <property type="entry name" value="CobW/HypB/UreG_nucleotide-bd"/>
</dbReference>
<dbReference type="InterPro" id="IPR027417">
    <property type="entry name" value="P-loop_NTPase"/>
</dbReference>
<dbReference type="InterPro" id="IPR051927">
    <property type="entry name" value="Zn_Chap_cDPG_Synth"/>
</dbReference>
<dbReference type="PANTHER" id="PTHR43603">
    <property type="entry name" value="COBW DOMAIN-CONTAINING PROTEIN DDB_G0274527"/>
    <property type="match status" value="1"/>
</dbReference>
<dbReference type="PANTHER" id="PTHR43603:SF1">
    <property type="entry name" value="ZINC-REGULATED GTPASE METALLOPROTEIN ACTIVATOR 1"/>
    <property type="match status" value="1"/>
</dbReference>
<dbReference type="Pfam" id="PF02492">
    <property type="entry name" value="cobW"/>
    <property type="match status" value="1"/>
</dbReference>
<dbReference type="Pfam" id="PF07683">
    <property type="entry name" value="CobW_C"/>
    <property type="match status" value="1"/>
</dbReference>
<dbReference type="SMART" id="SM00833">
    <property type="entry name" value="CobW_C"/>
    <property type="match status" value="1"/>
</dbReference>
<dbReference type="SUPFAM" id="SSF52540">
    <property type="entry name" value="P-loop containing nucleoside triphosphate hydrolases"/>
    <property type="match status" value="1"/>
</dbReference>
<name>P47K_PSECL</name>
<comment type="function">
    <text evidence="2">Zinc chaperone that directly transfers zinc cofactor to target proteins, thereby activating them. Zinc is transferred from the CXCC motif in the GTPase domain to the zinc binding site in target proteins in a process requiring GTP hydrolysis.</text>
</comment>
<comment type="catalytic activity">
    <reaction evidence="1">
        <text>GTP + H2O = GDP + phosphate + H(+)</text>
        <dbReference type="Rhea" id="RHEA:19669"/>
        <dbReference type="ChEBI" id="CHEBI:15377"/>
        <dbReference type="ChEBI" id="CHEBI:15378"/>
        <dbReference type="ChEBI" id="CHEBI:37565"/>
        <dbReference type="ChEBI" id="CHEBI:43474"/>
        <dbReference type="ChEBI" id="CHEBI:58189"/>
    </reaction>
    <physiologicalReaction direction="left-to-right" evidence="1">
        <dbReference type="Rhea" id="RHEA:19670"/>
    </physiologicalReaction>
</comment>
<comment type="similarity">
    <text evidence="5">Belongs to the SIMIBI class G3E GTPase family. ZNG1 subfamily.</text>
</comment>
<protein>
    <recommendedName>
        <fullName>Zinc chaperone P47K</fullName>
        <ecNumber evidence="1">3.6.5.-</ecNumber>
    </recommendedName>
    <alternativeName>
        <fullName evidence="4">47 kDa protein</fullName>
        <shortName evidence="4">P47K</shortName>
    </alternativeName>
</protein>
<accession>P31521</accession>
<reference key="1">
    <citation type="journal article" date="1991" name="J. Bacteriol.">
        <title>Cloning and characterization of genes responsible for metabolism of nitrile compounds from Pseudomonas chlororaphis B23.</title>
        <authorList>
            <person name="Nishiyama M."/>
            <person name="Horinouchi S."/>
            <person name="Kobayashi M."/>
            <person name="Nagasawa T."/>
            <person name="Yamada H."/>
            <person name="Beppu T."/>
        </authorList>
    </citation>
    <scope>NUCLEOTIDE SEQUENCE [GENOMIC DNA]</scope>
    <source>
        <strain>B23</strain>
    </source>
</reference>
<evidence type="ECO:0000250" key="1">
    <source>
        <dbReference type="UniProtKB" id="P24203"/>
    </source>
</evidence>
<evidence type="ECO:0000250" key="2">
    <source>
        <dbReference type="UniProtKB" id="Q8VEH6"/>
    </source>
</evidence>
<evidence type="ECO:0000255" key="3"/>
<evidence type="ECO:0000303" key="4">
    <source>
    </source>
</evidence>
<evidence type="ECO:0000305" key="5"/>
<proteinExistence type="inferred from homology"/>
<keyword id="KW-0067">ATP-binding</keyword>
<keyword id="KW-0143">Chaperone</keyword>
<keyword id="KW-0378">Hydrolase</keyword>
<keyword id="KW-0547">Nucleotide-binding</keyword>
<feature type="chain" id="PRO_0000058140" description="Zinc chaperone P47K">
    <location>
        <begin position="1"/>
        <end position="419"/>
    </location>
</feature>
<feature type="domain" description="CobW C-terminal">
    <location>
        <begin position="262"/>
        <end position="379"/>
    </location>
</feature>
<feature type="short sequence motif" description="CXCC motif" evidence="3">
    <location>
        <begin position="76"/>
        <end position="79"/>
    </location>
</feature>
<feature type="binding site" evidence="3">
    <location>
        <begin position="17"/>
        <end position="24"/>
    </location>
    <ligand>
        <name>GTP</name>
        <dbReference type="ChEBI" id="CHEBI:37565"/>
    </ligand>
</feature>
<feature type="binding site" evidence="3">
    <location>
        <begin position="79"/>
        <end position="83"/>
    </location>
    <ligand>
        <name>GTP</name>
        <dbReference type="ChEBI" id="CHEBI:37565"/>
    </ligand>
</feature>
<feature type="binding site" evidence="3">
    <location>
        <begin position="187"/>
        <end position="190"/>
    </location>
    <ligand>
        <name>GTP</name>
        <dbReference type="ChEBI" id="CHEBI:37565"/>
    </ligand>
</feature>
<sequence>MIEGAQAGRLPVTVLSGFLGAGKTTLLNAILRNRQGLRVAVIVNDMSEVNLDAESVQRDVSLHRGRDELIEMSNGCICCTLRADLLEQISDLARQQRFDYLLIESTGISEPMPVAETFAFLDTEGFSLSELARLDTLVTVVDGSQFQALLESTDTVARADTEAHTSTRHLADLLIEQVEYANVILVNKRDLIDEPGYQAVHAILAGLNPSARIMPMAHGNVALSSLLDTHLFDLPSLAASPGWMRKMEATDTPASESDTYGVTSWVYRERAPFHPQRLLEFLQKPWHNGRLLRSKGYFWLASRHLEIGLLAQSGKQFQWDYVGRWWNFIEPSQWPRDEYRLQGIMAKWDSVVGDCRQELVFIGQGLDTRVLQRELDHCLLSAQEIAAGPLAWQALPAATAFDTEALSARPTPPMAVQPT</sequence>
<organism>
    <name type="scientific">Pseudomonas chlororaphis</name>
    <name type="common">Pseudomonas aureofaciens</name>
    <dbReference type="NCBI Taxonomy" id="333"/>
    <lineage>
        <taxon>Bacteria</taxon>
        <taxon>Pseudomonadati</taxon>
        <taxon>Pseudomonadota</taxon>
        <taxon>Gammaproteobacteria</taxon>
        <taxon>Pseudomonadales</taxon>
        <taxon>Pseudomonadaceae</taxon>
        <taxon>Pseudomonas</taxon>
    </lineage>
</organism>